<protein>
    <recommendedName>
        <fullName evidence="1">Probable phosphoglycerate mutase GpmB</fullName>
        <ecNumber evidence="1">5.4.2.-</ecNumber>
    </recommendedName>
    <alternativeName>
        <fullName evidence="1">PGAM</fullName>
    </alternativeName>
    <alternativeName>
        <fullName evidence="1">Phosphoglyceromutase</fullName>
    </alternativeName>
</protein>
<reference key="1">
    <citation type="journal article" date="2009" name="PLoS Genet.">
        <title>Organised genome dynamics in the Escherichia coli species results in highly diverse adaptive paths.</title>
        <authorList>
            <person name="Touchon M."/>
            <person name="Hoede C."/>
            <person name="Tenaillon O."/>
            <person name="Barbe V."/>
            <person name="Baeriswyl S."/>
            <person name="Bidet P."/>
            <person name="Bingen E."/>
            <person name="Bonacorsi S."/>
            <person name="Bouchier C."/>
            <person name="Bouvet O."/>
            <person name="Calteau A."/>
            <person name="Chiapello H."/>
            <person name="Clermont O."/>
            <person name="Cruveiller S."/>
            <person name="Danchin A."/>
            <person name="Diard M."/>
            <person name="Dossat C."/>
            <person name="Karoui M.E."/>
            <person name="Frapy E."/>
            <person name="Garry L."/>
            <person name="Ghigo J.M."/>
            <person name="Gilles A.M."/>
            <person name="Johnson J."/>
            <person name="Le Bouguenec C."/>
            <person name="Lescat M."/>
            <person name="Mangenot S."/>
            <person name="Martinez-Jehanne V."/>
            <person name="Matic I."/>
            <person name="Nassif X."/>
            <person name="Oztas S."/>
            <person name="Petit M.A."/>
            <person name="Pichon C."/>
            <person name="Rouy Z."/>
            <person name="Ruf C.S."/>
            <person name="Schneider D."/>
            <person name="Tourret J."/>
            <person name="Vacherie B."/>
            <person name="Vallenet D."/>
            <person name="Medigue C."/>
            <person name="Rocha E.P.C."/>
            <person name="Denamur E."/>
        </authorList>
    </citation>
    <scope>NUCLEOTIDE SEQUENCE [LARGE SCALE GENOMIC DNA]</scope>
    <source>
        <strain>55989 / EAEC</strain>
    </source>
</reference>
<feature type="chain" id="PRO_1000149538" description="Probable phosphoglycerate mutase GpmB">
    <location>
        <begin position="1"/>
        <end position="215"/>
    </location>
</feature>
<feature type="active site" description="Tele-phosphohistidine intermediate" evidence="1">
    <location>
        <position position="9"/>
    </location>
</feature>
<feature type="active site" description="Proton donor/acceptor" evidence="1">
    <location>
        <position position="82"/>
    </location>
</feature>
<feature type="binding site" evidence="1">
    <location>
        <begin position="8"/>
        <end position="15"/>
    </location>
    <ligand>
        <name>substrate</name>
    </ligand>
</feature>
<feature type="binding site" evidence="1">
    <location>
        <begin position="21"/>
        <end position="22"/>
    </location>
    <ligand>
        <name>substrate</name>
    </ligand>
</feature>
<feature type="binding site" evidence="1">
    <location>
        <position position="58"/>
    </location>
    <ligand>
        <name>substrate</name>
    </ligand>
</feature>
<feature type="binding site" evidence="1">
    <location>
        <position position="60"/>
    </location>
    <ligand>
        <name>substrate</name>
    </ligand>
</feature>
<feature type="binding site" evidence="1">
    <location>
        <begin position="82"/>
        <end position="85"/>
    </location>
    <ligand>
        <name>substrate</name>
    </ligand>
</feature>
<feature type="binding site" evidence="1">
    <location>
        <begin position="104"/>
        <end position="105"/>
    </location>
    <ligand>
        <name>substrate</name>
    </ligand>
</feature>
<feature type="binding site" evidence="1">
    <location>
        <begin position="151"/>
        <end position="152"/>
    </location>
    <ligand>
        <name>substrate</name>
    </ligand>
</feature>
<feature type="site" description="Transition state stabilizer" evidence="1">
    <location>
        <position position="150"/>
    </location>
</feature>
<dbReference type="EC" id="5.4.2.-" evidence="1"/>
<dbReference type="EMBL" id="CU928145">
    <property type="protein sequence ID" value="CAV02206.1"/>
    <property type="molecule type" value="Genomic_DNA"/>
</dbReference>
<dbReference type="RefSeq" id="WP_000942344.1">
    <property type="nucleotide sequence ID" value="NC_011748.1"/>
</dbReference>
<dbReference type="SMR" id="B7LEP1"/>
<dbReference type="GeneID" id="93777450"/>
<dbReference type="KEGG" id="eck:EC55989_5057"/>
<dbReference type="HOGENOM" id="CLU_033323_9_5_6"/>
<dbReference type="UniPathway" id="UPA00109">
    <property type="reaction ID" value="UER00186"/>
</dbReference>
<dbReference type="Proteomes" id="UP000000746">
    <property type="component" value="Chromosome"/>
</dbReference>
<dbReference type="GO" id="GO:0005737">
    <property type="term" value="C:cytoplasm"/>
    <property type="evidence" value="ECO:0007669"/>
    <property type="project" value="TreeGrafter"/>
</dbReference>
<dbReference type="GO" id="GO:0016791">
    <property type="term" value="F:phosphatase activity"/>
    <property type="evidence" value="ECO:0007669"/>
    <property type="project" value="TreeGrafter"/>
</dbReference>
<dbReference type="GO" id="GO:0004619">
    <property type="term" value="F:phosphoglycerate mutase activity"/>
    <property type="evidence" value="ECO:0007669"/>
    <property type="project" value="UniProtKB-UniRule"/>
</dbReference>
<dbReference type="GO" id="GO:0006096">
    <property type="term" value="P:glycolytic process"/>
    <property type="evidence" value="ECO:0007669"/>
    <property type="project" value="UniProtKB-UniRule"/>
</dbReference>
<dbReference type="CDD" id="cd07067">
    <property type="entry name" value="HP_PGM_like"/>
    <property type="match status" value="1"/>
</dbReference>
<dbReference type="Gene3D" id="3.40.50.1240">
    <property type="entry name" value="Phosphoglycerate mutase-like"/>
    <property type="match status" value="1"/>
</dbReference>
<dbReference type="HAMAP" id="MF_01040">
    <property type="entry name" value="PGAM_GpmB"/>
    <property type="match status" value="1"/>
</dbReference>
<dbReference type="InterPro" id="IPR013078">
    <property type="entry name" value="His_Pase_superF_clade-1"/>
</dbReference>
<dbReference type="InterPro" id="IPR029033">
    <property type="entry name" value="His_PPase_superfam"/>
</dbReference>
<dbReference type="InterPro" id="IPR001345">
    <property type="entry name" value="PG/BPGM_mutase_AS"/>
</dbReference>
<dbReference type="InterPro" id="IPR050275">
    <property type="entry name" value="PGM_Phosphatase"/>
</dbReference>
<dbReference type="InterPro" id="IPR023086">
    <property type="entry name" value="Phosphoglycerate_mutase_GpmB"/>
</dbReference>
<dbReference type="NCBIfam" id="NF002901">
    <property type="entry name" value="PRK03482.1"/>
    <property type="match status" value="1"/>
</dbReference>
<dbReference type="PANTHER" id="PTHR48100">
    <property type="entry name" value="BROAD-SPECIFICITY PHOSPHATASE YOR283W-RELATED"/>
    <property type="match status" value="1"/>
</dbReference>
<dbReference type="PANTHER" id="PTHR48100:SF1">
    <property type="entry name" value="HISTIDINE PHOSPHATASE FAMILY PROTEIN-RELATED"/>
    <property type="match status" value="1"/>
</dbReference>
<dbReference type="Pfam" id="PF00300">
    <property type="entry name" value="His_Phos_1"/>
    <property type="match status" value="1"/>
</dbReference>
<dbReference type="SMART" id="SM00855">
    <property type="entry name" value="PGAM"/>
    <property type="match status" value="1"/>
</dbReference>
<dbReference type="SUPFAM" id="SSF53254">
    <property type="entry name" value="Phosphoglycerate mutase-like"/>
    <property type="match status" value="1"/>
</dbReference>
<dbReference type="PROSITE" id="PS00175">
    <property type="entry name" value="PG_MUTASE"/>
    <property type="match status" value="1"/>
</dbReference>
<proteinExistence type="inferred from homology"/>
<gene>
    <name evidence="1" type="primary">gpmB</name>
    <name type="ordered locus">EC55989_5057</name>
</gene>
<keyword id="KW-0324">Glycolysis</keyword>
<keyword id="KW-0413">Isomerase</keyword>
<keyword id="KW-1185">Reference proteome</keyword>
<comment type="catalytic activity">
    <reaction evidence="1">
        <text>(2R)-2-phosphoglycerate = (2R)-3-phosphoglycerate</text>
        <dbReference type="Rhea" id="RHEA:15901"/>
        <dbReference type="ChEBI" id="CHEBI:58272"/>
        <dbReference type="ChEBI" id="CHEBI:58289"/>
    </reaction>
</comment>
<comment type="pathway">
    <text evidence="1">Carbohydrate degradation; glycolysis; pyruvate from D-glyceraldehyde 3-phosphate: step 3/5.</text>
</comment>
<comment type="similarity">
    <text evidence="1">Belongs to the phosphoglycerate mutase family. GpmB subfamily.</text>
</comment>
<accession>B7LEP1</accession>
<organism>
    <name type="scientific">Escherichia coli (strain 55989 / EAEC)</name>
    <dbReference type="NCBI Taxonomy" id="585055"/>
    <lineage>
        <taxon>Bacteria</taxon>
        <taxon>Pseudomonadati</taxon>
        <taxon>Pseudomonadota</taxon>
        <taxon>Gammaproteobacteria</taxon>
        <taxon>Enterobacterales</taxon>
        <taxon>Enterobacteriaceae</taxon>
        <taxon>Escherichia</taxon>
    </lineage>
</organism>
<sequence length="215" mass="24065">MLQVYLVRHGETQWNAERRIQGQSDSPLTAKGEQQAMQVATRAKELGITHIISSDLGRTRRTAEIIAQACGCDIIFDSRLRELNMGVLEKRHIDSLTEEEENWRRQLVNGTVDGRIPEGESMQELSDRVNAALESCRDLPQGSRPLLVSHGIALGCLVSTILGLPAWAERRLRLRNCSISRVDYQESLWLASGWVVETAGDISHLDAPALDELQR</sequence>
<name>GPMB_ECO55</name>
<evidence type="ECO:0000255" key="1">
    <source>
        <dbReference type="HAMAP-Rule" id="MF_01040"/>
    </source>
</evidence>